<reference key="1">
    <citation type="submission" date="2005-08" db="EMBL/GenBank/DDBJ databases">
        <title>Annotation of mitochondrial genome of Ustilago maydis and comparative analysis of basidiomycete mtDNAs.</title>
        <authorList>
            <person name="Kennell J.C."/>
            <person name="Boehmer C."/>
        </authorList>
    </citation>
    <scope>NUCLEOTIDE SEQUENCE [LARGE SCALE GENOMIC DNA]</scope>
    <source>
        <strain>DSM 14603 / FGSC 9021 / UM521</strain>
    </source>
</reference>
<reference key="2">
    <citation type="journal article" date="2006" name="Nature">
        <title>Insights from the genome of the biotrophic fungal plant pathogen Ustilago maydis.</title>
        <authorList>
            <person name="Kaemper J."/>
            <person name="Kahmann R."/>
            <person name="Boelker M."/>
            <person name="Ma L.-J."/>
            <person name="Brefort T."/>
            <person name="Saville B.J."/>
            <person name="Banuett F."/>
            <person name="Kronstad J.W."/>
            <person name="Gold S.E."/>
            <person name="Mueller O."/>
            <person name="Perlin M.H."/>
            <person name="Woesten H.A.B."/>
            <person name="de Vries R."/>
            <person name="Ruiz-Herrera J."/>
            <person name="Reynaga-Pena C.G."/>
            <person name="Snetselaar K."/>
            <person name="McCann M."/>
            <person name="Perez-Martin J."/>
            <person name="Feldbruegge M."/>
            <person name="Basse C.W."/>
            <person name="Steinberg G."/>
            <person name="Ibeas J.I."/>
            <person name="Holloman W."/>
            <person name="Guzman P."/>
            <person name="Farman M.L."/>
            <person name="Stajich J.E."/>
            <person name="Sentandreu R."/>
            <person name="Gonzalez-Prieto J.M."/>
            <person name="Kennell J.C."/>
            <person name="Molina L."/>
            <person name="Schirawski J."/>
            <person name="Mendoza-Mendoza A."/>
            <person name="Greilinger D."/>
            <person name="Muench K."/>
            <person name="Roessel N."/>
            <person name="Scherer M."/>
            <person name="Vranes M."/>
            <person name="Ladendorf O."/>
            <person name="Vincon V."/>
            <person name="Fuchs U."/>
            <person name="Sandrock B."/>
            <person name="Meng S."/>
            <person name="Ho E.C.H."/>
            <person name="Cahill M.J."/>
            <person name="Boyce K.J."/>
            <person name="Klose J."/>
            <person name="Klosterman S.J."/>
            <person name="Deelstra H.J."/>
            <person name="Ortiz-Castellanos L."/>
            <person name="Li W."/>
            <person name="Sanchez-Alonso P."/>
            <person name="Schreier P.H."/>
            <person name="Haeuser-Hahn I."/>
            <person name="Vaupel M."/>
            <person name="Koopmann E."/>
            <person name="Friedrich G."/>
            <person name="Voss H."/>
            <person name="Schlueter T."/>
            <person name="Margolis J."/>
            <person name="Platt D."/>
            <person name="Swimmer C."/>
            <person name="Gnirke A."/>
            <person name="Chen F."/>
            <person name="Vysotskaia V."/>
            <person name="Mannhaupt G."/>
            <person name="Gueldener U."/>
            <person name="Muensterkoetter M."/>
            <person name="Haase D."/>
            <person name="Oesterheld M."/>
            <person name="Mewes H.-W."/>
            <person name="Mauceli E.W."/>
            <person name="DeCaprio D."/>
            <person name="Wade C.M."/>
            <person name="Butler J."/>
            <person name="Young S.K."/>
            <person name="Jaffe D.B."/>
            <person name="Calvo S.E."/>
            <person name="Nusbaum C."/>
            <person name="Galagan J.E."/>
            <person name="Birren B.W."/>
        </authorList>
    </citation>
    <scope>NUCLEOTIDE SEQUENCE [LARGE SCALE GENOMIC DNA]</scope>
    <source>
        <strain>DSM 14603 / FGSC 9021 / UM521</strain>
    </source>
</reference>
<reference key="3">
    <citation type="journal article" date="2001" name="Int. J. Syst. Evol. Microbiol.">
        <title>Molecular phylogenetics of the genus Rhodotorula and related basidiomycetous yeasts inferred from the mitochondrial cytochrome b gene.</title>
        <authorList>
            <person name="Biswas S.K."/>
            <person name="Yokoyama K."/>
            <person name="Nishimura K."/>
            <person name="Miyaji M."/>
        </authorList>
    </citation>
    <scope>NUCLEOTIDE SEQUENCE [GENOMIC DNA] OF 149-280</scope>
    <source>
        <strain>IFM 49220 / JCM 2005</strain>
    </source>
</reference>
<accession>Q0H8X3</accession>
<accession>Q956F9</accession>
<geneLocation type="mitochondrion"/>
<gene>
    <name type="primary">COB</name>
    <name type="synonym">CYTB</name>
</gene>
<feature type="chain" id="PRO_0000271144" description="Cytochrome b">
    <location>
        <begin position="1"/>
        <end position="393"/>
    </location>
</feature>
<feature type="transmembrane region" description="Helical" evidence="3">
    <location>
        <begin position="32"/>
        <end position="52"/>
    </location>
</feature>
<feature type="transmembrane region" description="Helical" evidence="3">
    <location>
        <begin position="76"/>
        <end position="98"/>
    </location>
</feature>
<feature type="transmembrane region" description="Helical" evidence="3">
    <location>
        <begin position="113"/>
        <end position="133"/>
    </location>
</feature>
<feature type="transmembrane region" description="Helical" evidence="3">
    <location>
        <begin position="179"/>
        <end position="199"/>
    </location>
</feature>
<feature type="transmembrane region" description="Helical" evidence="3">
    <location>
        <begin position="225"/>
        <end position="245"/>
    </location>
</feature>
<feature type="transmembrane region" description="Helical" evidence="3">
    <location>
        <begin position="289"/>
        <end position="309"/>
    </location>
</feature>
<feature type="transmembrane region" description="Helical" evidence="3">
    <location>
        <begin position="321"/>
        <end position="341"/>
    </location>
</feature>
<feature type="transmembrane region" description="Helical" evidence="3">
    <location>
        <begin position="348"/>
        <end position="368"/>
    </location>
</feature>
<feature type="binding site" description="axial binding residue" evidence="5">
    <location>
        <position position="82"/>
    </location>
    <ligand>
        <name>heme b</name>
        <dbReference type="ChEBI" id="CHEBI:60344"/>
        <label>b562</label>
    </ligand>
    <ligandPart>
        <name>Fe</name>
        <dbReference type="ChEBI" id="CHEBI:18248"/>
    </ligandPart>
</feature>
<feature type="binding site" description="axial binding residue" evidence="5">
    <location>
        <position position="96"/>
    </location>
    <ligand>
        <name>heme b</name>
        <dbReference type="ChEBI" id="CHEBI:60344"/>
        <label>b566</label>
    </ligand>
    <ligandPart>
        <name>Fe</name>
        <dbReference type="ChEBI" id="CHEBI:18248"/>
    </ligandPart>
</feature>
<feature type="binding site" description="axial binding residue" evidence="5">
    <location>
        <position position="183"/>
    </location>
    <ligand>
        <name>heme b</name>
        <dbReference type="ChEBI" id="CHEBI:60344"/>
        <label>b562</label>
    </ligand>
    <ligandPart>
        <name>Fe</name>
        <dbReference type="ChEBI" id="CHEBI:18248"/>
    </ligandPart>
</feature>
<feature type="binding site" description="axial binding residue" evidence="5">
    <location>
        <position position="197"/>
    </location>
    <ligand>
        <name>heme b</name>
        <dbReference type="ChEBI" id="CHEBI:60344"/>
        <label>b566</label>
    </ligand>
    <ligandPart>
        <name>Fe</name>
        <dbReference type="ChEBI" id="CHEBI:18248"/>
    </ligandPart>
</feature>
<feature type="binding site" evidence="2">
    <location>
        <position position="202"/>
    </location>
    <ligand>
        <name>a ubiquinone</name>
        <dbReference type="ChEBI" id="CHEBI:16389"/>
    </ligand>
</feature>
<evidence type="ECO:0000250" key="1"/>
<evidence type="ECO:0000250" key="2">
    <source>
        <dbReference type="UniProtKB" id="P00157"/>
    </source>
</evidence>
<evidence type="ECO:0000250" key="3">
    <source>
        <dbReference type="UniProtKB" id="P00163"/>
    </source>
</evidence>
<evidence type="ECO:0000255" key="4">
    <source>
        <dbReference type="PROSITE-ProRule" id="PRU00967"/>
    </source>
</evidence>
<evidence type="ECO:0000255" key="5">
    <source>
        <dbReference type="PROSITE-ProRule" id="PRU00968"/>
    </source>
</evidence>
<comment type="function">
    <text evidence="3">Component of the ubiquinol-cytochrome c reductase complex (complex III or cytochrome b-c1 complex) that is part of the mitochondrial respiratory chain. The b-c1 complex mediates electron transfer from ubiquinol to cytochrome c. Contributes to the generation of a proton gradient across the mitochondrial membrane that is then used for ATP synthesis.</text>
</comment>
<comment type="cofactor">
    <cofactor evidence="3">
        <name>heme b</name>
        <dbReference type="ChEBI" id="CHEBI:60344"/>
    </cofactor>
    <text evidence="3">Binds 2 heme b groups non-covalently.</text>
</comment>
<comment type="subunit">
    <text evidence="3">Fungal cytochrome b-c1 complex contains 10 subunits; 3 respiratory subunits, 2 core proteins and 5 low-molecular weight proteins. Cytochrome b-c1 complex is a homodimer.</text>
</comment>
<comment type="subcellular location">
    <subcellularLocation>
        <location evidence="3">Mitochondrion inner membrane</location>
        <topology evidence="3">Multi-pass membrane protein</topology>
    </subcellularLocation>
</comment>
<comment type="miscellaneous">
    <text evidence="1">Heme 1 (or BL or b562) is low-potential and absorbs at about 562 nm, and heme 2 (or BH or b566) is high-potential and absorbs at about 566 nm.</text>
</comment>
<comment type="similarity">
    <text evidence="4 5">Belongs to the cytochrome b family.</text>
</comment>
<comment type="caution">
    <text evidence="3">The protein contains only eight transmembrane helices, not nine as predicted by bioinformatics tools.</text>
</comment>
<name>CYB_MYCMD</name>
<sequence>MRLLKTHPILGLANSYLIDSPQPSNISYMWNFGSLLGVCLIIQILTGVFLAMHYTPSVDLAFISVEHIMRDVNYGWLIRYLHANTASFFFIFVYLHIGRGLYYGSYKSPRTLLWSIGVIILVLMMAIAFLGYVLPYGQMSLWGATVITNLLSAIPWIGQDFVEFVWGGFSVNNATLNRFFSLHYLLPFVLAALAAMHLLALHEHGSSNPLGVSGNTDRLPFHPYFTFKDLVTIFVFLLALSLFVFYMPNAMGHSDNYIPANPMQTPASIVPEWYLLPFYAILRSIPSKLIGVLAMFMSLLILLGMPILDTSRIRGSQFRPLMRFSFWTFVACFFILMFIGSQHVESPYVEIGAAATAYYFAWFLVVVPAIGIIENTLMDIALTEETSSFHRVV</sequence>
<dbReference type="EMBL" id="DQ157700">
    <property type="protein sequence ID" value="AAZ67015.1"/>
    <property type="molecule type" value="Genomic_DNA"/>
</dbReference>
<dbReference type="EMBL" id="AACP01000277">
    <property type="status" value="NOT_ANNOTATED_CDS"/>
    <property type="molecule type" value="Genomic_DNA"/>
</dbReference>
<dbReference type="EMBL" id="AB040663">
    <property type="protein sequence ID" value="BAB61014.2"/>
    <property type="molecule type" value="Genomic_DNA"/>
</dbReference>
<dbReference type="RefSeq" id="YP_762699.1">
    <property type="nucleotide sequence ID" value="NC_008368.1"/>
</dbReference>
<dbReference type="SMR" id="Q0H8X3"/>
<dbReference type="FunCoup" id="Q0H8X3">
    <property type="interactions" value="85"/>
</dbReference>
<dbReference type="STRING" id="237631.Q0H8X3"/>
<dbReference type="GeneID" id="4308280"/>
<dbReference type="InParanoid" id="Q0H8X3"/>
<dbReference type="Proteomes" id="UP000000561">
    <property type="component" value="Mitochondrion"/>
</dbReference>
<dbReference type="GO" id="GO:0016020">
    <property type="term" value="C:membrane"/>
    <property type="evidence" value="ECO:0000318"/>
    <property type="project" value="GO_Central"/>
</dbReference>
<dbReference type="GO" id="GO:0005743">
    <property type="term" value="C:mitochondrial inner membrane"/>
    <property type="evidence" value="ECO:0007669"/>
    <property type="project" value="UniProtKB-SubCell"/>
</dbReference>
<dbReference type="GO" id="GO:0045275">
    <property type="term" value="C:respiratory chain complex III"/>
    <property type="evidence" value="ECO:0000318"/>
    <property type="project" value="GO_Central"/>
</dbReference>
<dbReference type="GO" id="GO:0046872">
    <property type="term" value="F:metal ion binding"/>
    <property type="evidence" value="ECO:0007669"/>
    <property type="project" value="UniProtKB-KW"/>
</dbReference>
<dbReference type="GO" id="GO:0008121">
    <property type="term" value="F:ubiquinol-cytochrome-c reductase activity"/>
    <property type="evidence" value="ECO:0007669"/>
    <property type="project" value="InterPro"/>
</dbReference>
<dbReference type="GO" id="GO:0006122">
    <property type="term" value="P:mitochondrial electron transport, ubiquinol to cytochrome c"/>
    <property type="evidence" value="ECO:0000318"/>
    <property type="project" value="GO_Central"/>
</dbReference>
<dbReference type="CDD" id="cd00290">
    <property type="entry name" value="cytochrome_b_C"/>
    <property type="match status" value="1"/>
</dbReference>
<dbReference type="CDD" id="cd00284">
    <property type="entry name" value="Cytochrome_b_N"/>
    <property type="match status" value="1"/>
</dbReference>
<dbReference type="FunFam" id="1.20.810.10:FF:000002">
    <property type="entry name" value="Cytochrome b"/>
    <property type="match status" value="1"/>
</dbReference>
<dbReference type="Gene3D" id="1.20.810.10">
    <property type="entry name" value="Cytochrome Bc1 Complex, Chain C"/>
    <property type="match status" value="1"/>
</dbReference>
<dbReference type="InterPro" id="IPR005798">
    <property type="entry name" value="Cyt_b/b6_C"/>
</dbReference>
<dbReference type="InterPro" id="IPR036150">
    <property type="entry name" value="Cyt_b/b6_C_sf"/>
</dbReference>
<dbReference type="InterPro" id="IPR005797">
    <property type="entry name" value="Cyt_b/b6_N"/>
</dbReference>
<dbReference type="InterPro" id="IPR027387">
    <property type="entry name" value="Cytb/b6-like_sf"/>
</dbReference>
<dbReference type="InterPro" id="IPR030689">
    <property type="entry name" value="Cytochrome_b"/>
</dbReference>
<dbReference type="InterPro" id="IPR048260">
    <property type="entry name" value="Cytochrome_b_C_euk/bac"/>
</dbReference>
<dbReference type="InterPro" id="IPR048259">
    <property type="entry name" value="Cytochrome_b_N_euk/bac"/>
</dbReference>
<dbReference type="InterPro" id="IPR016174">
    <property type="entry name" value="Di-haem_cyt_TM"/>
</dbReference>
<dbReference type="PANTHER" id="PTHR19271">
    <property type="entry name" value="CYTOCHROME B"/>
    <property type="match status" value="1"/>
</dbReference>
<dbReference type="PANTHER" id="PTHR19271:SF16">
    <property type="entry name" value="CYTOCHROME B"/>
    <property type="match status" value="1"/>
</dbReference>
<dbReference type="Pfam" id="PF00032">
    <property type="entry name" value="Cytochrom_B_C"/>
    <property type="match status" value="1"/>
</dbReference>
<dbReference type="Pfam" id="PF00033">
    <property type="entry name" value="Cytochrome_B"/>
    <property type="match status" value="1"/>
</dbReference>
<dbReference type="PIRSF" id="PIRSF038885">
    <property type="entry name" value="COB"/>
    <property type="match status" value="1"/>
</dbReference>
<dbReference type="SUPFAM" id="SSF81648">
    <property type="entry name" value="a domain/subunit of cytochrome bc1 complex (Ubiquinol-cytochrome c reductase)"/>
    <property type="match status" value="1"/>
</dbReference>
<dbReference type="SUPFAM" id="SSF81342">
    <property type="entry name" value="Transmembrane di-heme cytochromes"/>
    <property type="match status" value="1"/>
</dbReference>
<dbReference type="PROSITE" id="PS51003">
    <property type="entry name" value="CYTB_CTER"/>
    <property type="match status" value="1"/>
</dbReference>
<dbReference type="PROSITE" id="PS51002">
    <property type="entry name" value="CYTB_NTER"/>
    <property type="match status" value="1"/>
</dbReference>
<proteinExistence type="inferred from homology"/>
<organism>
    <name type="scientific">Mycosarcoma maydis</name>
    <name type="common">Corn smut fungus</name>
    <name type="synonym">Ustilago maydis</name>
    <dbReference type="NCBI Taxonomy" id="5270"/>
    <lineage>
        <taxon>Eukaryota</taxon>
        <taxon>Fungi</taxon>
        <taxon>Dikarya</taxon>
        <taxon>Basidiomycota</taxon>
        <taxon>Ustilaginomycotina</taxon>
        <taxon>Ustilaginomycetes</taxon>
        <taxon>Ustilaginales</taxon>
        <taxon>Ustilaginaceae</taxon>
        <taxon>Mycosarcoma</taxon>
    </lineage>
</organism>
<keyword id="KW-0249">Electron transport</keyword>
<keyword id="KW-0349">Heme</keyword>
<keyword id="KW-0408">Iron</keyword>
<keyword id="KW-0472">Membrane</keyword>
<keyword id="KW-0479">Metal-binding</keyword>
<keyword id="KW-0496">Mitochondrion</keyword>
<keyword id="KW-0999">Mitochondrion inner membrane</keyword>
<keyword id="KW-1185">Reference proteome</keyword>
<keyword id="KW-0679">Respiratory chain</keyword>
<keyword id="KW-0812">Transmembrane</keyword>
<keyword id="KW-1133">Transmembrane helix</keyword>
<keyword id="KW-0813">Transport</keyword>
<keyword id="KW-0830">Ubiquinone</keyword>
<protein>
    <recommendedName>
        <fullName>Cytochrome b</fullName>
    </recommendedName>
    <alternativeName>
        <fullName>Complex III subunit 3</fullName>
    </alternativeName>
    <alternativeName>
        <fullName>Complex III subunit III</fullName>
    </alternativeName>
    <alternativeName>
        <fullName>Cytochrome b-c1 complex subunit 3</fullName>
    </alternativeName>
    <alternativeName>
        <fullName>Ubiquinol-cytochrome-c reductase complex cytochrome b subunit</fullName>
    </alternativeName>
</protein>